<gene>
    <name evidence="1" type="primary">metG</name>
    <name type="ordered locus">Ppha_1197</name>
</gene>
<keyword id="KW-0030">Aminoacyl-tRNA synthetase</keyword>
<keyword id="KW-0067">ATP-binding</keyword>
<keyword id="KW-0963">Cytoplasm</keyword>
<keyword id="KW-0436">Ligase</keyword>
<keyword id="KW-0479">Metal-binding</keyword>
<keyword id="KW-0547">Nucleotide-binding</keyword>
<keyword id="KW-0648">Protein biosynthesis</keyword>
<keyword id="KW-1185">Reference proteome</keyword>
<keyword id="KW-0694">RNA-binding</keyword>
<keyword id="KW-0820">tRNA-binding</keyword>
<keyword id="KW-0862">Zinc</keyword>
<accession>B4SGQ6</accession>
<name>SYM_PELPB</name>
<evidence type="ECO:0000255" key="1">
    <source>
        <dbReference type="HAMAP-Rule" id="MF_00098"/>
    </source>
</evidence>
<comment type="function">
    <text evidence="1">Is required not only for elongation of protein synthesis but also for the initiation of all mRNA translation through initiator tRNA(fMet) aminoacylation.</text>
</comment>
<comment type="catalytic activity">
    <reaction evidence="1">
        <text>tRNA(Met) + L-methionine + ATP = L-methionyl-tRNA(Met) + AMP + diphosphate</text>
        <dbReference type="Rhea" id="RHEA:13481"/>
        <dbReference type="Rhea" id="RHEA-COMP:9667"/>
        <dbReference type="Rhea" id="RHEA-COMP:9698"/>
        <dbReference type="ChEBI" id="CHEBI:30616"/>
        <dbReference type="ChEBI" id="CHEBI:33019"/>
        <dbReference type="ChEBI" id="CHEBI:57844"/>
        <dbReference type="ChEBI" id="CHEBI:78442"/>
        <dbReference type="ChEBI" id="CHEBI:78530"/>
        <dbReference type="ChEBI" id="CHEBI:456215"/>
        <dbReference type="EC" id="6.1.1.10"/>
    </reaction>
</comment>
<comment type="cofactor">
    <cofactor evidence="1">
        <name>Zn(2+)</name>
        <dbReference type="ChEBI" id="CHEBI:29105"/>
    </cofactor>
    <text evidence="1">Binds 1 zinc ion per subunit.</text>
</comment>
<comment type="subunit">
    <text evidence="1">Homodimer.</text>
</comment>
<comment type="subcellular location">
    <subcellularLocation>
        <location evidence="1">Cytoplasm</location>
    </subcellularLocation>
</comment>
<comment type="similarity">
    <text evidence="1">Belongs to the class-I aminoacyl-tRNA synthetase family. MetG type 1 subfamily.</text>
</comment>
<organism>
    <name type="scientific">Pelodictyon phaeoclathratiforme (strain DSM 5477 / BU-1)</name>
    <dbReference type="NCBI Taxonomy" id="324925"/>
    <lineage>
        <taxon>Bacteria</taxon>
        <taxon>Pseudomonadati</taxon>
        <taxon>Chlorobiota</taxon>
        <taxon>Chlorobiia</taxon>
        <taxon>Chlorobiales</taxon>
        <taxon>Chlorobiaceae</taxon>
        <taxon>Chlorobium/Pelodictyon group</taxon>
        <taxon>Pelodictyon</taxon>
    </lineage>
</organism>
<feature type="chain" id="PRO_1000093721" description="Methionine--tRNA ligase">
    <location>
        <begin position="1"/>
        <end position="700"/>
    </location>
</feature>
<feature type="domain" description="tRNA-binding" evidence="1">
    <location>
        <begin position="599"/>
        <end position="700"/>
    </location>
</feature>
<feature type="short sequence motif" description="'HIGH' region">
    <location>
        <begin position="14"/>
        <end position="24"/>
    </location>
</feature>
<feature type="short sequence motif" description="'KMSKS' region">
    <location>
        <begin position="344"/>
        <end position="348"/>
    </location>
</feature>
<feature type="binding site" evidence="1">
    <location>
        <position position="146"/>
    </location>
    <ligand>
        <name>Zn(2+)</name>
        <dbReference type="ChEBI" id="CHEBI:29105"/>
    </ligand>
</feature>
<feature type="binding site" evidence="1">
    <location>
        <position position="149"/>
    </location>
    <ligand>
        <name>Zn(2+)</name>
        <dbReference type="ChEBI" id="CHEBI:29105"/>
    </ligand>
</feature>
<feature type="binding site" evidence="1">
    <location>
        <position position="159"/>
    </location>
    <ligand>
        <name>Zn(2+)</name>
        <dbReference type="ChEBI" id="CHEBI:29105"/>
    </ligand>
</feature>
<feature type="binding site" evidence="1">
    <location>
        <position position="162"/>
    </location>
    <ligand>
        <name>Zn(2+)</name>
        <dbReference type="ChEBI" id="CHEBI:29105"/>
    </ligand>
</feature>
<feature type="binding site" evidence="1">
    <location>
        <position position="347"/>
    </location>
    <ligand>
        <name>ATP</name>
        <dbReference type="ChEBI" id="CHEBI:30616"/>
    </ligand>
</feature>
<protein>
    <recommendedName>
        <fullName evidence="1">Methionine--tRNA ligase</fullName>
        <ecNumber evidence="1">6.1.1.10</ecNumber>
    </recommendedName>
    <alternativeName>
        <fullName evidence="1">Methionyl-tRNA synthetase</fullName>
        <shortName evidence="1">MetRS</shortName>
    </alternativeName>
</protein>
<sequence>MHPFTKTLVTTALPYANGPVHLGHLAGVYLPADLYVRYMRLKGEDIIHIGGSDEHGVPITITAEREGISPKDVVDRYHRMNSEAFSKCGISFDYYGRTTSEVHHKTAQEFFTDIEEKGIFIRKSEKLFFDRKADRFLSDRYVTGTCPICNNTEANGDQCEQCGTHLSPLELINPKSKLSDATPELRETMHWYFPLGRFQDQLESYVHQHEDDWRQNVLNYTHTWLKQGLKDRAITRDLSWGIKVPLESEEAEGKVLYVWFDAVLGYISFTREWAEKLGQSERWKEYWQNPECRLLHFIGKDNVVFHTLMLPAILMAWNEGRQSECYNLADNVPASEFMNFEGRKFSKSRNYAVYLGEFLEKFPADTLRYSIAMNYPENKDTDFSWQDFQNRTNGELADTLGNFIKRSVDFTNARFDGEVPWDYSEDLLNNVLLCDQIDDIARAYDGFHFREAVSSSMDIARNANRFLTQNEPWKLIKTDPDAAARVMSISLNLCHALSILFYPVIPETCNRIHAMLGFDGTIDSLIKPGVSLWEQAKKPGLNKGHRLLGKSEILFTKIEDADIAPELKKIELLVAEAEKREAGAEQQKMEFKPLISFDDFLKVDLRVARVITAEKVKKAAKLLKLQLQVGSATKQVLAGIAKYYTPEEMVGKNVVIVANLADRTIRDDVSEGMILAVEGADGKLFVIEPEGEEINGRQIQ</sequence>
<dbReference type="EC" id="6.1.1.10" evidence="1"/>
<dbReference type="EMBL" id="CP001110">
    <property type="protein sequence ID" value="ACF43469.1"/>
    <property type="molecule type" value="Genomic_DNA"/>
</dbReference>
<dbReference type="RefSeq" id="WP_012507961.1">
    <property type="nucleotide sequence ID" value="NC_011060.1"/>
</dbReference>
<dbReference type="SMR" id="B4SGQ6"/>
<dbReference type="STRING" id="324925.Ppha_1197"/>
<dbReference type="KEGG" id="pph:Ppha_1197"/>
<dbReference type="eggNOG" id="COG0073">
    <property type="taxonomic scope" value="Bacteria"/>
</dbReference>
<dbReference type="eggNOG" id="COG0143">
    <property type="taxonomic scope" value="Bacteria"/>
</dbReference>
<dbReference type="HOGENOM" id="CLU_009710_1_2_10"/>
<dbReference type="OrthoDB" id="9810191at2"/>
<dbReference type="Proteomes" id="UP000002724">
    <property type="component" value="Chromosome"/>
</dbReference>
<dbReference type="GO" id="GO:0005829">
    <property type="term" value="C:cytosol"/>
    <property type="evidence" value="ECO:0007669"/>
    <property type="project" value="TreeGrafter"/>
</dbReference>
<dbReference type="GO" id="GO:0005524">
    <property type="term" value="F:ATP binding"/>
    <property type="evidence" value="ECO:0007669"/>
    <property type="project" value="UniProtKB-UniRule"/>
</dbReference>
<dbReference type="GO" id="GO:0046872">
    <property type="term" value="F:metal ion binding"/>
    <property type="evidence" value="ECO:0007669"/>
    <property type="project" value="UniProtKB-KW"/>
</dbReference>
<dbReference type="GO" id="GO:0004825">
    <property type="term" value="F:methionine-tRNA ligase activity"/>
    <property type="evidence" value="ECO:0007669"/>
    <property type="project" value="UniProtKB-UniRule"/>
</dbReference>
<dbReference type="GO" id="GO:0000049">
    <property type="term" value="F:tRNA binding"/>
    <property type="evidence" value="ECO:0007669"/>
    <property type="project" value="UniProtKB-KW"/>
</dbReference>
<dbReference type="GO" id="GO:0006431">
    <property type="term" value="P:methionyl-tRNA aminoacylation"/>
    <property type="evidence" value="ECO:0007669"/>
    <property type="project" value="UniProtKB-UniRule"/>
</dbReference>
<dbReference type="CDD" id="cd07957">
    <property type="entry name" value="Anticodon_Ia_Met"/>
    <property type="match status" value="1"/>
</dbReference>
<dbReference type="CDD" id="cd00814">
    <property type="entry name" value="MetRS_core"/>
    <property type="match status" value="1"/>
</dbReference>
<dbReference type="FunFam" id="2.20.28.20:FF:000001">
    <property type="entry name" value="Methionine--tRNA ligase"/>
    <property type="match status" value="1"/>
</dbReference>
<dbReference type="FunFam" id="2.40.50.140:FF:000042">
    <property type="entry name" value="Methionine--tRNA ligase"/>
    <property type="match status" value="1"/>
</dbReference>
<dbReference type="Gene3D" id="3.40.50.620">
    <property type="entry name" value="HUPs"/>
    <property type="match status" value="1"/>
</dbReference>
<dbReference type="Gene3D" id="1.10.730.10">
    <property type="entry name" value="Isoleucyl-tRNA Synthetase, Domain 1"/>
    <property type="match status" value="1"/>
</dbReference>
<dbReference type="Gene3D" id="2.20.28.20">
    <property type="entry name" value="Methionyl-tRNA synthetase, Zn-domain"/>
    <property type="match status" value="1"/>
</dbReference>
<dbReference type="Gene3D" id="2.40.50.140">
    <property type="entry name" value="Nucleic acid-binding proteins"/>
    <property type="match status" value="1"/>
</dbReference>
<dbReference type="HAMAP" id="MF_00098">
    <property type="entry name" value="Met_tRNA_synth_type1"/>
    <property type="match status" value="1"/>
</dbReference>
<dbReference type="InterPro" id="IPR001412">
    <property type="entry name" value="aa-tRNA-synth_I_CS"/>
</dbReference>
<dbReference type="InterPro" id="IPR041872">
    <property type="entry name" value="Anticodon_Met"/>
</dbReference>
<dbReference type="InterPro" id="IPR004495">
    <property type="entry name" value="Met-tRNA-synth_bsu_C"/>
</dbReference>
<dbReference type="InterPro" id="IPR023458">
    <property type="entry name" value="Met-tRNA_ligase_1"/>
</dbReference>
<dbReference type="InterPro" id="IPR014758">
    <property type="entry name" value="Met-tRNA_synth"/>
</dbReference>
<dbReference type="InterPro" id="IPR015413">
    <property type="entry name" value="Methionyl/Leucyl_tRNA_Synth"/>
</dbReference>
<dbReference type="InterPro" id="IPR033911">
    <property type="entry name" value="MetRS_core"/>
</dbReference>
<dbReference type="InterPro" id="IPR029038">
    <property type="entry name" value="MetRS_Zn"/>
</dbReference>
<dbReference type="InterPro" id="IPR012340">
    <property type="entry name" value="NA-bd_OB-fold"/>
</dbReference>
<dbReference type="InterPro" id="IPR014729">
    <property type="entry name" value="Rossmann-like_a/b/a_fold"/>
</dbReference>
<dbReference type="InterPro" id="IPR002547">
    <property type="entry name" value="tRNA-bd_dom"/>
</dbReference>
<dbReference type="InterPro" id="IPR009080">
    <property type="entry name" value="tRNAsynth_Ia_anticodon-bd"/>
</dbReference>
<dbReference type="NCBIfam" id="TIGR00398">
    <property type="entry name" value="metG"/>
    <property type="match status" value="1"/>
</dbReference>
<dbReference type="NCBIfam" id="TIGR00399">
    <property type="entry name" value="metG_C_term"/>
    <property type="match status" value="1"/>
</dbReference>
<dbReference type="NCBIfam" id="NF001100">
    <property type="entry name" value="PRK00133.1"/>
    <property type="match status" value="1"/>
</dbReference>
<dbReference type="PANTHER" id="PTHR45765">
    <property type="entry name" value="METHIONINE--TRNA LIGASE"/>
    <property type="match status" value="1"/>
</dbReference>
<dbReference type="PANTHER" id="PTHR45765:SF1">
    <property type="entry name" value="METHIONINE--TRNA LIGASE, CYTOPLASMIC"/>
    <property type="match status" value="1"/>
</dbReference>
<dbReference type="Pfam" id="PF19303">
    <property type="entry name" value="Anticodon_3"/>
    <property type="match status" value="1"/>
</dbReference>
<dbReference type="Pfam" id="PF09334">
    <property type="entry name" value="tRNA-synt_1g"/>
    <property type="match status" value="1"/>
</dbReference>
<dbReference type="Pfam" id="PF01588">
    <property type="entry name" value="tRNA_bind"/>
    <property type="match status" value="1"/>
</dbReference>
<dbReference type="PRINTS" id="PR01041">
    <property type="entry name" value="TRNASYNTHMET"/>
</dbReference>
<dbReference type="SUPFAM" id="SSF47323">
    <property type="entry name" value="Anticodon-binding domain of a subclass of class I aminoacyl-tRNA synthetases"/>
    <property type="match status" value="1"/>
</dbReference>
<dbReference type="SUPFAM" id="SSF57770">
    <property type="entry name" value="Methionyl-tRNA synthetase (MetRS), Zn-domain"/>
    <property type="match status" value="1"/>
</dbReference>
<dbReference type="SUPFAM" id="SSF50249">
    <property type="entry name" value="Nucleic acid-binding proteins"/>
    <property type="match status" value="1"/>
</dbReference>
<dbReference type="SUPFAM" id="SSF52374">
    <property type="entry name" value="Nucleotidylyl transferase"/>
    <property type="match status" value="1"/>
</dbReference>
<dbReference type="PROSITE" id="PS00178">
    <property type="entry name" value="AA_TRNA_LIGASE_I"/>
    <property type="match status" value="1"/>
</dbReference>
<dbReference type="PROSITE" id="PS50886">
    <property type="entry name" value="TRBD"/>
    <property type="match status" value="1"/>
</dbReference>
<proteinExistence type="inferred from homology"/>
<reference key="1">
    <citation type="submission" date="2008-06" db="EMBL/GenBank/DDBJ databases">
        <title>Complete sequence of Pelodictyon phaeoclathratiforme BU-1.</title>
        <authorList>
            <consortium name="US DOE Joint Genome Institute"/>
            <person name="Lucas S."/>
            <person name="Copeland A."/>
            <person name="Lapidus A."/>
            <person name="Glavina del Rio T."/>
            <person name="Dalin E."/>
            <person name="Tice H."/>
            <person name="Bruce D."/>
            <person name="Goodwin L."/>
            <person name="Pitluck S."/>
            <person name="Schmutz J."/>
            <person name="Larimer F."/>
            <person name="Land M."/>
            <person name="Hauser L."/>
            <person name="Kyrpides N."/>
            <person name="Mikhailova N."/>
            <person name="Liu Z."/>
            <person name="Li T."/>
            <person name="Zhao F."/>
            <person name="Overmann J."/>
            <person name="Bryant D.A."/>
            <person name="Richardson P."/>
        </authorList>
    </citation>
    <scope>NUCLEOTIDE SEQUENCE [LARGE SCALE GENOMIC DNA]</scope>
    <source>
        <strain>DSM 5477 / BU-1</strain>
    </source>
</reference>